<accession>A1RJQ4</accession>
<dbReference type="EC" id="3.1.21.10" evidence="1"/>
<dbReference type="EMBL" id="CP000503">
    <property type="protein sequence ID" value="ABM24899.1"/>
    <property type="molecule type" value="Genomic_DNA"/>
</dbReference>
<dbReference type="RefSeq" id="WP_011789370.1">
    <property type="nucleotide sequence ID" value="NC_008750.1"/>
</dbReference>
<dbReference type="SMR" id="A1RJQ4"/>
<dbReference type="GeneID" id="67443506"/>
<dbReference type="KEGG" id="shw:Sputw3181_2071"/>
<dbReference type="HOGENOM" id="CLU_091257_2_1_6"/>
<dbReference type="Proteomes" id="UP000002597">
    <property type="component" value="Chromosome"/>
</dbReference>
<dbReference type="GO" id="GO:0005737">
    <property type="term" value="C:cytoplasm"/>
    <property type="evidence" value="ECO:0007669"/>
    <property type="project" value="UniProtKB-SubCell"/>
</dbReference>
<dbReference type="GO" id="GO:0048476">
    <property type="term" value="C:Holliday junction resolvase complex"/>
    <property type="evidence" value="ECO:0007669"/>
    <property type="project" value="UniProtKB-UniRule"/>
</dbReference>
<dbReference type="GO" id="GO:0008821">
    <property type="term" value="F:crossover junction DNA endonuclease activity"/>
    <property type="evidence" value="ECO:0007669"/>
    <property type="project" value="UniProtKB-UniRule"/>
</dbReference>
<dbReference type="GO" id="GO:0003677">
    <property type="term" value="F:DNA binding"/>
    <property type="evidence" value="ECO:0007669"/>
    <property type="project" value="UniProtKB-KW"/>
</dbReference>
<dbReference type="GO" id="GO:0000287">
    <property type="term" value="F:magnesium ion binding"/>
    <property type="evidence" value="ECO:0007669"/>
    <property type="project" value="UniProtKB-UniRule"/>
</dbReference>
<dbReference type="GO" id="GO:0006310">
    <property type="term" value="P:DNA recombination"/>
    <property type="evidence" value="ECO:0007669"/>
    <property type="project" value="UniProtKB-UniRule"/>
</dbReference>
<dbReference type="GO" id="GO:0006281">
    <property type="term" value="P:DNA repair"/>
    <property type="evidence" value="ECO:0007669"/>
    <property type="project" value="UniProtKB-UniRule"/>
</dbReference>
<dbReference type="CDD" id="cd16962">
    <property type="entry name" value="RuvC"/>
    <property type="match status" value="1"/>
</dbReference>
<dbReference type="FunFam" id="3.30.420.10:FF:000002">
    <property type="entry name" value="Crossover junction endodeoxyribonuclease RuvC"/>
    <property type="match status" value="1"/>
</dbReference>
<dbReference type="Gene3D" id="3.30.420.10">
    <property type="entry name" value="Ribonuclease H-like superfamily/Ribonuclease H"/>
    <property type="match status" value="1"/>
</dbReference>
<dbReference type="HAMAP" id="MF_00034">
    <property type="entry name" value="RuvC"/>
    <property type="match status" value="1"/>
</dbReference>
<dbReference type="InterPro" id="IPR012337">
    <property type="entry name" value="RNaseH-like_sf"/>
</dbReference>
<dbReference type="InterPro" id="IPR036397">
    <property type="entry name" value="RNaseH_sf"/>
</dbReference>
<dbReference type="InterPro" id="IPR020563">
    <property type="entry name" value="X-over_junc_endoDNase_Mg_BS"/>
</dbReference>
<dbReference type="InterPro" id="IPR002176">
    <property type="entry name" value="X-over_junc_endoDNase_RuvC"/>
</dbReference>
<dbReference type="NCBIfam" id="NF000711">
    <property type="entry name" value="PRK00039.2-1"/>
    <property type="match status" value="1"/>
</dbReference>
<dbReference type="NCBIfam" id="TIGR00228">
    <property type="entry name" value="ruvC"/>
    <property type="match status" value="1"/>
</dbReference>
<dbReference type="PANTHER" id="PTHR30194">
    <property type="entry name" value="CROSSOVER JUNCTION ENDODEOXYRIBONUCLEASE RUVC"/>
    <property type="match status" value="1"/>
</dbReference>
<dbReference type="PANTHER" id="PTHR30194:SF3">
    <property type="entry name" value="CROSSOVER JUNCTION ENDODEOXYRIBONUCLEASE RUVC"/>
    <property type="match status" value="1"/>
</dbReference>
<dbReference type="Pfam" id="PF02075">
    <property type="entry name" value="RuvC"/>
    <property type="match status" value="1"/>
</dbReference>
<dbReference type="PRINTS" id="PR00696">
    <property type="entry name" value="RSOLVASERUVC"/>
</dbReference>
<dbReference type="SUPFAM" id="SSF53098">
    <property type="entry name" value="Ribonuclease H-like"/>
    <property type="match status" value="1"/>
</dbReference>
<dbReference type="PROSITE" id="PS01321">
    <property type="entry name" value="RUVC"/>
    <property type="match status" value="1"/>
</dbReference>
<sequence>MAIILGVDPGSRITGYGVIQCQGRHQIYLGSGCIRTSSEELSGRLKQIFDGITEIIRQYQPDEFAIERVFMAKNADSALKLGQARGAAIVAATVANLPVAEYSATQIKSAVVGTGRAKKEQIQHMIQQLLKLPAAPQADAADALGVAVCHYHTRQSLIALSGRATARTYGRYR</sequence>
<organism>
    <name type="scientific">Shewanella sp. (strain W3-18-1)</name>
    <dbReference type="NCBI Taxonomy" id="351745"/>
    <lineage>
        <taxon>Bacteria</taxon>
        <taxon>Pseudomonadati</taxon>
        <taxon>Pseudomonadota</taxon>
        <taxon>Gammaproteobacteria</taxon>
        <taxon>Alteromonadales</taxon>
        <taxon>Shewanellaceae</taxon>
        <taxon>Shewanella</taxon>
    </lineage>
</organism>
<name>RUVC_SHESW</name>
<comment type="function">
    <text evidence="1">The RuvA-RuvB-RuvC complex processes Holliday junction (HJ) DNA during genetic recombination and DNA repair. Endonuclease that resolves HJ intermediates. Cleaves cruciform DNA by making single-stranded nicks across the HJ at symmetrical positions within the homologous arms, yielding a 5'-phosphate and a 3'-hydroxyl group; requires a central core of homology in the junction. The consensus cleavage sequence is 5'-(A/T)TT(C/G)-3'. Cleavage occurs on the 3'-side of the TT dinucleotide at the point of strand exchange. HJ branch migration catalyzed by RuvA-RuvB allows RuvC to scan DNA until it finds its consensus sequence, where it cleaves and resolves the cruciform DNA.</text>
</comment>
<comment type="catalytic activity">
    <reaction evidence="1">
        <text>Endonucleolytic cleavage at a junction such as a reciprocal single-stranded crossover between two homologous DNA duplexes (Holliday junction).</text>
        <dbReference type="EC" id="3.1.21.10"/>
    </reaction>
</comment>
<comment type="cofactor">
    <cofactor evidence="1">
        <name>Mg(2+)</name>
        <dbReference type="ChEBI" id="CHEBI:18420"/>
    </cofactor>
    <text evidence="1">Binds 2 Mg(2+) ion per subunit.</text>
</comment>
<comment type="subunit">
    <text evidence="1">Homodimer which binds Holliday junction (HJ) DNA. The HJ becomes 2-fold symmetrical on binding to RuvC with unstacked arms; it has a different conformation from HJ DNA in complex with RuvA. In the full resolvosome a probable DNA-RuvA(4)-RuvB(12)-RuvC(2) complex forms which resolves the HJ.</text>
</comment>
<comment type="subcellular location">
    <subcellularLocation>
        <location evidence="1">Cytoplasm</location>
    </subcellularLocation>
</comment>
<comment type="similarity">
    <text evidence="1">Belongs to the RuvC family.</text>
</comment>
<proteinExistence type="inferred from homology"/>
<evidence type="ECO:0000255" key="1">
    <source>
        <dbReference type="HAMAP-Rule" id="MF_00034"/>
    </source>
</evidence>
<reference key="1">
    <citation type="submission" date="2006-12" db="EMBL/GenBank/DDBJ databases">
        <title>Complete sequence of Shewanella sp. W3-18-1.</title>
        <authorList>
            <consortium name="US DOE Joint Genome Institute"/>
            <person name="Copeland A."/>
            <person name="Lucas S."/>
            <person name="Lapidus A."/>
            <person name="Barry K."/>
            <person name="Detter J.C."/>
            <person name="Glavina del Rio T."/>
            <person name="Hammon N."/>
            <person name="Israni S."/>
            <person name="Dalin E."/>
            <person name="Tice H."/>
            <person name="Pitluck S."/>
            <person name="Chain P."/>
            <person name="Malfatti S."/>
            <person name="Shin M."/>
            <person name="Vergez L."/>
            <person name="Schmutz J."/>
            <person name="Larimer F."/>
            <person name="Land M."/>
            <person name="Hauser L."/>
            <person name="Kyrpides N."/>
            <person name="Lykidis A."/>
            <person name="Tiedje J."/>
            <person name="Richardson P."/>
        </authorList>
    </citation>
    <scope>NUCLEOTIDE SEQUENCE [LARGE SCALE GENOMIC DNA]</scope>
    <source>
        <strain>W3-18-1</strain>
    </source>
</reference>
<gene>
    <name evidence="1" type="primary">ruvC</name>
    <name type="ordered locus">Sputw3181_2071</name>
</gene>
<keyword id="KW-0963">Cytoplasm</keyword>
<keyword id="KW-0227">DNA damage</keyword>
<keyword id="KW-0233">DNA recombination</keyword>
<keyword id="KW-0234">DNA repair</keyword>
<keyword id="KW-0238">DNA-binding</keyword>
<keyword id="KW-0255">Endonuclease</keyword>
<keyword id="KW-0378">Hydrolase</keyword>
<keyword id="KW-0460">Magnesium</keyword>
<keyword id="KW-0479">Metal-binding</keyword>
<keyword id="KW-0540">Nuclease</keyword>
<feature type="chain" id="PRO_1000002835" description="Crossover junction endodeoxyribonuclease RuvC">
    <location>
        <begin position="1"/>
        <end position="173"/>
    </location>
</feature>
<feature type="active site" evidence="1">
    <location>
        <position position="8"/>
    </location>
</feature>
<feature type="active site" evidence="1">
    <location>
        <position position="67"/>
    </location>
</feature>
<feature type="active site" evidence="1">
    <location>
        <position position="139"/>
    </location>
</feature>
<feature type="binding site" evidence="1">
    <location>
        <position position="8"/>
    </location>
    <ligand>
        <name>Mg(2+)</name>
        <dbReference type="ChEBI" id="CHEBI:18420"/>
        <label>1</label>
    </ligand>
</feature>
<feature type="binding site" evidence="1">
    <location>
        <position position="67"/>
    </location>
    <ligand>
        <name>Mg(2+)</name>
        <dbReference type="ChEBI" id="CHEBI:18420"/>
        <label>2</label>
    </ligand>
</feature>
<feature type="binding site" evidence="1">
    <location>
        <position position="139"/>
    </location>
    <ligand>
        <name>Mg(2+)</name>
        <dbReference type="ChEBI" id="CHEBI:18420"/>
        <label>1</label>
    </ligand>
</feature>
<protein>
    <recommendedName>
        <fullName evidence="1">Crossover junction endodeoxyribonuclease RuvC</fullName>
        <ecNumber evidence="1">3.1.21.10</ecNumber>
    </recommendedName>
    <alternativeName>
        <fullName evidence="1">Holliday junction nuclease RuvC</fullName>
    </alternativeName>
    <alternativeName>
        <fullName evidence="1">Holliday junction resolvase RuvC</fullName>
    </alternativeName>
</protein>